<comment type="catalytic activity">
    <reaction>
        <text>Release of an N-terminal dipeptide from a peptide comprising four or more residues, with broad specificity. Also acts on dipeptidyl 2-naphthylamides.</text>
        <dbReference type="EC" id="3.4.14.4"/>
    </reaction>
</comment>
<comment type="cofactor">
    <cofactor evidence="3">
        <name>Zn(2+)</name>
        <dbReference type="ChEBI" id="CHEBI:29105"/>
    </cofactor>
    <text evidence="3">Binds 1 zinc ion per subunit.</text>
</comment>
<comment type="subcellular location">
    <subcellularLocation>
        <location evidence="1">Cytoplasm</location>
    </subcellularLocation>
</comment>
<comment type="similarity">
    <text evidence="4">Belongs to the peptidase M49 family.</text>
</comment>
<protein>
    <recommendedName>
        <fullName>Dipeptidyl peptidase 3</fullName>
        <ecNumber>3.4.14.4</ecNumber>
    </recommendedName>
    <alternativeName>
        <fullName>Dipeptidyl aminopeptidase III</fullName>
    </alternativeName>
    <alternativeName>
        <fullName>Dipeptidyl arylamidase III</fullName>
    </alternativeName>
    <alternativeName>
        <fullName>Dipeptidyl peptidase III</fullName>
        <shortName>DPP III</shortName>
    </alternativeName>
</protein>
<organism>
    <name type="scientific">Nematostella vectensis</name>
    <name type="common">Starlet sea anemone</name>
    <dbReference type="NCBI Taxonomy" id="45351"/>
    <lineage>
        <taxon>Eukaryota</taxon>
        <taxon>Metazoa</taxon>
        <taxon>Cnidaria</taxon>
        <taxon>Anthozoa</taxon>
        <taxon>Hexacorallia</taxon>
        <taxon>Actiniaria</taxon>
        <taxon>Edwardsiidae</taxon>
        <taxon>Nematostella</taxon>
    </lineage>
</organism>
<keyword id="KW-0031">Aminopeptidase</keyword>
<keyword id="KW-0963">Cytoplasm</keyword>
<keyword id="KW-0378">Hydrolase</keyword>
<keyword id="KW-0479">Metal-binding</keyword>
<keyword id="KW-0482">Metalloprotease</keyword>
<keyword id="KW-0645">Protease</keyword>
<keyword id="KW-1185">Reference proteome</keyword>
<keyword id="KW-0862">Zinc</keyword>
<evidence type="ECO:0000250" key="1"/>
<evidence type="ECO:0000250" key="2">
    <source>
        <dbReference type="UniProtKB" id="O55096"/>
    </source>
</evidence>
<evidence type="ECO:0000250" key="3">
    <source>
        <dbReference type="UniProtKB" id="Q9NY33"/>
    </source>
</evidence>
<evidence type="ECO:0000305" key="4"/>
<gene>
    <name type="primary">dpp3</name>
    <name type="ORF">v1g183903</name>
</gene>
<proteinExistence type="inferred from homology"/>
<feature type="chain" id="PRO_0000332968" description="Dipeptidyl peptidase 3">
    <location>
        <begin position="1"/>
        <end position="729"/>
    </location>
</feature>
<feature type="active site" evidence="2">
    <location>
        <position position="460"/>
    </location>
</feature>
<feature type="binding site" evidence="3">
    <location>
        <position position="459"/>
    </location>
    <ligand>
        <name>Zn(2+)</name>
        <dbReference type="ChEBI" id="CHEBI:29105"/>
        <note>catalytic</note>
    </ligand>
</feature>
<feature type="binding site" evidence="3">
    <location>
        <position position="464"/>
    </location>
    <ligand>
        <name>Zn(2+)</name>
        <dbReference type="ChEBI" id="CHEBI:29105"/>
        <note>catalytic</note>
    </ligand>
</feature>
<feature type="binding site" evidence="3">
    <location>
        <position position="517"/>
    </location>
    <ligand>
        <name>Zn(2+)</name>
        <dbReference type="ChEBI" id="CHEBI:29105"/>
        <note>catalytic</note>
    </ligand>
</feature>
<reference key="1">
    <citation type="journal article" date="2007" name="Science">
        <title>Sea anemone genome reveals ancestral eumetazoan gene repertoire and genomic organization.</title>
        <authorList>
            <person name="Putnam N.H."/>
            <person name="Srivastava M."/>
            <person name="Hellsten U."/>
            <person name="Dirks B."/>
            <person name="Chapman J."/>
            <person name="Salamov A."/>
            <person name="Terry A."/>
            <person name="Shapiro H."/>
            <person name="Lindquist E."/>
            <person name="Kapitonov V.V."/>
            <person name="Jurka J."/>
            <person name="Genikhovich G."/>
            <person name="Grigoriev I.V."/>
            <person name="Lucas S.M."/>
            <person name="Steele R.E."/>
            <person name="Finnerty J.R."/>
            <person name="Technau U."/>
            <person name="Martindale M.Q."/>
            <person name="Rokhsar D.S."/>
        </authorList>
    </citation>
    <scope>NUCLEOTIDE SEQUENCE [LARGE SCALE GENOMIC DNA]</scope>
    <source>
        <strain>CH2 X CH6</strain>
    </source>
</reference>
<name>DPP3_NEMVE</name>
<accession>A7RZW4</accession>
<dbReference type="EC" id="3.4.14.4"/>
<dbReference type="EMBL" id="DS469558">
    <property type="protein sequence ID" value="EDO43060.1"/>
    <property type="molecule type" value="Genomic_DNA"/>
</dbReference>
<dbReference type="RefSeq" id="XP_001635123.1">
    <property type="nucleotide sequence ID" value="XM_001635073.1"/>
</dbReference>
<dbReference type="SMR" id="A7RZW4"/>
<dbReference type="STRING" id="45351.A7RZW4"/>
<dbReference type="MEROPS" id="M49.001"/>
<dbReference type="EnsemblMetazoa" id="EDO43060">
    <property type="protein sequence ID" value="EDO43060"/>
    <property type="gene ID" value="NEMVEDRAFT_v1g183903"/>
</dbReference>
<dbReference type="eggNOG" id="KOG3675">
    <property type="taxonomic scope" value="Eukaryota"/>
</dbReference>
<dbReference type="HOGENOM" id="CLU_011977_0_0_1"/>
<dbReference type="InParanoid" id="A7RZW4"/>
<dbReference type="OMA" id="QRYWIRD"/>
<dbReference type="PhylomeDB" id="A7RZW4"/>
<dbReference type="Proteomes" id="UP000001593">
    <property type="component" value="Unassembled WGS sequence"/>
</dbReference>
<dbReference type="GO" id="GO:0005737">
    <property type="term" value="C:cytoplasm"/>
    <property type="evidence" value="ECO:0000318"/>
    <property type="project" value="GO_Central"/>
</dbReference>
<dbReference type="GO" id="GO:0004177">
    <property type="term" value="F:aminopeptidase activity"/>
    <property type="evidence" value="ECO:0007669"/>
    <property type="project" value="UniProtKB-KW"/>
</dbReference>
<dbReference type="GO" id="GO:0008239">
    <property type="term" value="F:dipeptidyl-peptidase activity"/>
    <property type="evidence" value="ECO:0000318"/>
    <property type="project" value="GO_Central"/>
</dbReference>
<dbReference type="GO" id="GO:0046872">
    <property type="term" value="F:metal ion binding"/>
    <property type="evidence" value="ECO:0007669"/>
    <property type="project" value="UniProtKB-KW"/>
</dbReference>
<dbReference type="GO" id="GO:0008235">
    <property type="term" value="F:metalloexopeptidase activity"/>
    <property type="evidence" value="ECO:0007669"/>
    <property type="project" value="InterPro"/>
</dbReference>
<dbReference type="GO" id="GO:0006508">
    <property type="term" value="P:proteolysis"/>
    <property type="evidence" value="ECO:0007669"/>
    <property type="project" value="UniProtKB-KW"/>
</dbReference>
<dbReference type="FunFam" id="3.30.540.30:FF:000001">
    <property type="entry name" value="Dipeptidyl peptidase 3"/>
    <property type="match status" value="1"/>
</dbReference>
<dbReference type="FunFam" id="3.30.540.30:FF:000002">
    <property type="entry name" value="Dipeptidyl peptidase 3"/>
    <property type="match status" value="1"/>
</dbReference>
<dbReference type="FunFam" id="3.30.540.30:FF:000008">
    <property type="entry name" value="Dipeptidyl peptidase 3"/>
    <property type="match status" value="1"/>
</dbReference>
<dbReference type="Gene3D" id="3.30.540.30">
    <property type="match status" value="3"/>
</dbReference>
<dbReference type="InterPro" id="IPR005317">
    <property type="entry name" value="Dipeptidyl-peptase3"/>
</dbReference>
<dbReference type="InterPro" id="IPR039461">
    <property type="entry name" value="Peptidase_M49"/>
</dbReference>
<dbReference type="PANTHER" id="PTHR23422:SF11">
    <property type="entry name" value="DIPEPTIDYL PEPTIDASE 3"/>
    <property type="match status" value="1"/>
</dbReference>
<dbReference type="PANTHER" id="PTHR23422">
    <property type="entry name" value="DIPEPTIDYL PEPTIDASE III-RELATED"/>
    <property type="match status" value="1"/>
</dbReference>
<dbReference type="Pfam" id="PF03571">
    <property type="entry name" value="Peptidase_M49"/>
    <property type="match status" value="1"/>
</dbReference>
<dbReference type="PIRSF" id="PIRSF007828">
    <property type="entry name" value="Dipeptidyl-peptidase_III"/>
    <property type="match status" value="1"/>
</dbReference>
<sequence>MAESDFDKTQYIIPNEANINFLECRTAFGGLTEKEKCYAHYLYKASWEGALICLLQTSPEAPGIFLLFQKLFSSESVGSLKEKALKSSVAPTEEEFTSFLTYVAAFYGNIGNYKSFGDTKFIPNLPKEKFQTIVFSSQAYATNAKSVVTLWSDCCEAMYSLKPKLRQLGFGEQGISTYYSSNCNKSDAEFIQGFLKEKNIEGWNTRLFKEINDKGHVTYNLRLASTALSAEDCSAEKKDDVASLVKSYEYQGTTVKITRGDYAGLLKKVVDNLIMAKGFASNENEVAMLDHYVHSFTTGSVEAHKDGSRHWIRDKGPVVETYIGFIESYRDPFGVRAEYEGFVSIVNKSMSAKFADLVSSAETLLPQLPWPSSYEKDTFLRPDFTSLDVLGFGSSGIPAGINIPNYDEIRQDEGFKNVSLGNVLSAHSADQKITFLTEEDAELYSKLKAPSFEVQVGLHELLGHGSGKLFIKKPDGSYNFDHKSVVNTETGEKIQSWYTEGETWSTKFAELSSSYEECRAECVGIYLCLNKDVLRIFGHEGAAGDDIVYVNWLNMVRAGLLGLEFYTPENNKWRQAHMQARYVILRVLLEAGEQLVQLTRIAGSDGKPDILVTLDRNKISCVGQPAIGAFLRKLQVFKSTADYASGKDLYDKYSAVDAHFLEMRNIVLARKTPRRMFVQSHTTIQDGVVSLKEFEASASGMIASFIARFPGDDPVLEKLWRDDLPYHQY</sequence>